<proteinExistence type="inferred from homology"/>
<protein>
    <recommendedName>
        <fullName>Multidrug resistance protein NorM</fullName>
    </recommendedName>
    <alternativeName>
        <fullName>Multidrug-efflux transporter</fullName>
    </alternativeName>
</protein>
<keyword id="KW-0046">Antibiotic resistance</keyword>
<keyword id="KW-0050">Antiport</keyword>
<keyword id="KW-0997">Cell inner membrane</keyword>
<keyword id="KW-1003">Cell membrane</keyword>
<keyword id="KW-0406">Ion transport</keyword>
<keyword id="KW-0472">Membrane</keyword>
<keyword id="KW-0915">Sodium</keyword>
<keyword id="KW-0739">Sodium transport</keyword>
<keyword id="KW-0812">Transmembrane</keyword>
<keyword id="KW-1133">Transmembrane helix</keyword>
<keyword id="KW-0813">Transport</keyword>
<accession>Q9F5N7</accession>
<evidence type="ECO:0000250" key="1"/>
<evidence type="ECO:0000255" key="2"/>
<evidence type="ECO:0000269" key="3">
    <source>
    </source>
</evidence>
<evidence type="ECO:0000305" key="4"/>
<gene>
    <name type="primary">norM</name>
</gene>
<name>NORM_BURVI</name>
<reference key="1">
    <citation type="journal article" date="2002" name="FEMS Microbiol. Lett.">
        <title>Cloning and characterization of the Burkholderia vietnamiensis norM gene encoding a multi-drug efflux protein.</title>
        <authorList>
            <person name="Fehlner-Gardiner C.C."/>
            <person name="Valvano M.A."/>
        </authorList>
    </citation>
    <scope>NUCLEOTIDE SEQUENCE [GENOMIC DNA]</scope>
    <scope>FUNCTION</scope>
    <source>
        <strain>CEP040</strain>
    </source>
</reference>
<organism>
    <name type="scientific">Burkholderia vietnamiensis</name>
    <dbReference type="NCBI Taxonomy" id="60552"/>
    <lineage>
        <taxon>Bacteria</taxon>
        <taxon>Pseudomonadati</taxon>
        <taxon>Pseudomonadota</taxon>
        <taxon>Betaproteobacteria</taxon>
        <taxon>Burkholderiales</taxon>
        <taxon>Burkholderiaceae</taxon>
        <taxon>Burkholderia</taxon>
        <taxon>Burkholderia cepacia complex</taxon>
    </lineage>
</organism>
<dbReference type="EMBL" id="AF312031">
    <property type="protein sequence ID" value="AAG27731.1"/>
    <property type="molecule type" value="Genomic_DNA"/>
</dbReference>
<dbReference type="RefSeq" id="WP_011883895.1">
    <property type="nucleotide sequence ID" value="NZ_UZVT01000001.1"/>
</dbReference>
<dbReference type="SMR" id="Q9F5N7"/>
<dbReference type="TCDB" id="2.A.66.1.9">
    <property type="family name" value="the multidrug/oligosaccharidyl-lipid/polysaccharide (mop) flippase superfamily"/>
</dbReference>
<dbReference type="GeneID" id="45682761"/>
<dbReference type="OMA" id="AAWFELF"/>
<dbReference type="GO" id="GO:0005886">
    <property type="term" value="C:plasma membrane"/>
    <property type="evidence" value="ECO:0007669"/>
    <property type="project" value="UniProtKB-SubCell"/>
</dbReference>
<dbReference type="GO" id="GO:0015297">
    <property type="term" value="F:antiporter activity"/>
    <property type="evidence" value="ECO:0007669"/>
    <property type="project" value="UniProtKB-KW"/>
</dbReference>
<dbReference type="GO" id="GO:0042910">
    <property type="term" value="F:xenobiotic transmembrane transporter activity"/>
    <property type="evidence" value="ECO:0007669"/>
    <property type="project" value="InterPro"/>
</dbReference>
<dbReference type="GO" id="GO:0046677">
    <property type="term" value="P:response to antibiotic"/>
    <property type="evidence" value="ECO:0007669"/>
    <property type="project" value="UniProtKB-KW"/>
</dbReference>
<dbReference type="GO" id="GO:0006814">
    <property type="term" value="P:sodium ion transport"/>
    <property type="evidence" value="ECO:0007669"/>
    <property type="project" value="UniProtKB-KW"/>
</dbReference>
<dbReference type="CDD" id="cd13131">
    <property type="entry name" value="MATE_NorM_like"/>
    <property type="match status" value="1"/>
</dbReference>
<dbReference type="InterPro" id="IPR002528">
    <property type="entry name" value="MATE_fam"/>
</dbReference>
<dbReference type="InterPro" id="IPR050222">
    <property type="entry name" value="MATE_MdtK"/>
</dbReference>
<dbReference type="InterPro" id="IPR048279">
    <property type="entry name" value="MdtK-like"/>
</dbReference>
<dbReference type="NCBIfam" id="TIGR00797">
    <property type="entry name" value="matE"/>
    <property type="match status" value="1"/>
</dbReference>
<dbReference type="PANTHER" id="PTHR43298:SF2">
    <property type="entry name" value="FMN_FAD EXPORTER YEEO-RELATED"/>
    <property type="match status" value="1"/>
</dbReference>
<dbReference type="PANTHER" id="PTHR43298">
    <property type="entry name" value="MULTIDRUG RESISTANCE PROTEIN NORM-RELATED"/>
    <property type="match status" value="1"/>
</dbReference>
<dbReference type="Pfam" id="PF01554">
    <property type="entry name" value="MatE"/>
    <property type="match status" value="2"/>
</dbReference>
<dbReference type="PIRSF" id="PIRSF006603">
    <property type="entry name" value="DinF"/>
    <property type="match status" value="1"/>
</dbReference>
<feature type="chain" id="PRO_0000164213" description="Multidrug resistance protein NorM">
    <location>
        <begin position="1"/>
        <end position="462"/>
    </location>
</feature>
<feature type="transmembrane region" description="Helical" evidence="2">
    <location>
        <begin position="56"/>
        <end position="76"/>
    </location>
</feature>
<feature type="transmembrane region" description="Helical" evidence="2">
    <location>
        <begin position="99"/>
        <end position="119"/>
    </location>
</feature>
<feature type="transmembrane region" description="Helical" evidence="2">
    <location>
        <begin position="147"/>
        <end position="167"/>
    </location>
</feature>
<feature type="transmembrane region" description="Helical" evidence="2">
    <location>
        <begin position="172"/>
        <end position="192"/>
    </location>
</feature>
<feature type="transmembrane region" description="Helical" evidence="2">
    <location>
        <begin position="202"/>
        <end position="222"/>
    </location>
</feature>
<feature type="transmembrane region" description="Helical" evidence="2">
    <location>
        <begin position="247"/>
        <end position="267"/>
    </location>
</feature>
<feature type="transmembrane region" description="Helical" evidence="2">
    <location>
        <begin position="280"/>
        <end position="300"/>
    </location>
</feature>
<feature type="transmembrane region" description="Helical" evidence="2">
    <location>
        <begin position="325"/>
        <end position="345"/>
    </location>
</feature>
<feature type="transmembrane region" description="Helical" evidence="2">
    <location>
        <begin position="361"/>
        <end position="381"/>
    </location>
</feature>
<feature type="transmembrane region" description="Helical" evidence="2">
    <location>
        <begin position="402"/>
        <end position="422"/>
    </location>
</feature>
<feature type="transmembrane region" description="Helical" evidence="2">
    <location>
        <begin position="430"/>
        <end position="450"/>
    </location>
</feature>
<sequence length="462" mass="47860">MSHSGLTRTAAAPPSLSRHAVDTARLAAPLAIAQLSQMAMSVTDTVLLGSLGPDSLAAGGLGANFFFVIVTVLQGVLSSVSVSVAHARGAQAEHRVPHIYWTGFVLSVLLAIPAVVALSLSEPLLLMFHEPPTLAQHVGEYTGILRFAALGSLIGVGLMRAFLPAIGAARRLLWVSIGGIGVNAVLNYGLIHGAYGLPRLGFLGSAVATTITIWLTAFALIWLLHGRARFRHFVSAARPKLPMMGELIGIGWPVAITYGVESTLFLATGLTVGVLGATALAAHQIALNVASVAFMVPLAIGQAANVRVGYWIGAGDPVAARHAGFVALGLGVAFMSLSGLVLILAPHAIVGLYLHLDDPANAATVSLAASLLGIAAVFQIVDGMQTVGSGALRGLRDTRIPMLAATFGYWGIGFPTGYWLAFHAGLGARGLWWGLAAGLASVAVLMAWRFHLKTSSLIAAPR</sequence>
<comment type="function">
    <text evidence="3">Multidrug efflux pump. Confers probably resistance to the cationic peptide polymyxin B (PMB).</text>
</comment>
<comment type="subcellular location">
    <subcellularLocation>
        <location evidence="1">Cell inner membrane</location>
        <topology evidence="1">Multi-pass membrane protein</topology>
    </subcellularLocation>
</comment>
<comment type="similarity">
    <text evidence="4">Belongs to the multi antimicrobial extrusion (MATE) (TC 2.A.66.1) family.</text>
</comment>